<keyword id="KW-0233">DNA recombination</keyword>
<keyword id="KW-0238">DNA-binding</keyword>
<keyword id="KW-0814">Transposable element</keyword>
<keyword id="KW-0815">Transposition</keyword>
<accession>P13694</accession>
<comment type="function">
    <text>Required for transposition of transposon Tn3926.</text>
</comment>
<comment type="similarity">
    <text evidence="2">Belongs to the transposase 7 family.</text>
</comment>
<organism>
    <name type="scientific">Escherichia coli</name>
    <dbReference type="NCBI Taxonomy" id="562"/>
    <lineage>
        <taxon>Bacteria</taxon>
        <taxon>Pseudomonadati</taxon>
        <taxon>Pseudomonadota</taxon>
        <taxon>Gammaproteobacteria</taxon>
        <taxon>Enterobacterales</taxon>
        <taxon>Enterobacteriaceae</taxon>
        <taxon>Escherichia</taxon>
    </lineage>
</organism>
<protein>
    <recommendedName>
        <fullName>Transposase for transposon Tn3926</fullName>
    </recommendedName>
</protein>
<gene>
    <name type="primary">tnpA</name>
</gene>
<name>TNP7_ECOLX</name>
<dbReference type="EMBL" id="X14236">
    <property type="protein sequence ID" value="CAA32453.1"/>
    <property type="molecule type" value="Genomic_DNA"/>
</dbReference>
<dbReference type="PIR" id="S03285">
    <property type="entry name" value="TQEC26"/>
</dbReference>
<dbReference type="SMR" id="P13694"/>
<dbReference type="GO" id="GO:0003677">
    <property type="term" value="F:DNA binding"/>
    <property type="evidence" value="ECO:0007669"/>
    <property type="project" value="UniProtKB-KW"/>
</dbReference>
<dbReference type="GO" id="GO:0004803">
    <property type="term" value="F:transposase activity"/>
    <property type="evidence" value="ECO:0007669"/>
    <property type="project" value="InterPro"/>
</dbReference>
<dbReference type="GO" id="GO:0006313">
    <property type="term" value="P:DNA transposition"/>
    <property type="evidence" value="ECO:0007669"/>
    <property type="project" value="InterPro"/>
</dbReference>
<dbReference type="InterPro" id="IPR025296">
    <property type="entry name" value="DUF4158"/>
</dbReference>
<dbReference type="InterPro" id="IPR047653">
    <property type="entry name" value="Tn3-like_transpos"/>
</dbReference>
<dbReference type="InterPro" id="IPR002513">
    <property type="entry name" value="Tn3_Tnp_DDE_dom"/>
</dbReference>
<dbReference type="NCBIfam" id="NF033527">
    <property type="entry name" value="transpos_Tn3"/>
    <property type="match status" value="1"/>
</dbReference>
<dbReference type="Pfam" id="PF01526">
    <property type="entry name" value="DDE_Tnp_Tn3"/>
    <property type="match status" value="1"/>
</dbReference>
<dbReference type="Pfam" id="PF13700">
    <property type="entry name" value="DUF4158"/>
    <property type="match status" value="1"/>
</dbReference>
<reference key="1">
    <citation type="journal article" date="1989" name="Nucleic Acids Res.">
        <title>DNA sequence of the transposase gene of the class II transposon, Tn3926.</title>
        <authorList>
            <person name="Turner A.K."/>
            <person name="Grinsted J."/>
        </authorList>
    </citation>
    <scope>NUCLEOTIDE SEQUENCE [GENOMIC DNA]</scope>
</reference>
<proteinExistence type="inferred from homology"/>
<evidence type="ECO:0000256" key="1">
    <source>
        <dbReference type="SAM" id="MobiDB-lite"/>
    </source>
</evidence>
<evidence type="ECO:0000305" key="2"/>
<feature type="chain" id="PRO_0000075430" description="Transposase for transposon Tn3926">
    <location>
        <begin position="1"/>
        <end position="990"/>
    </location>
</feature>
<feature type="region of interest" description="Disordered" evidence="1">
    <location>
        <begin position="673"/>
        <end position="698"/>
    </location>
</feature>
<feature type="compositionally biased region" description="Polar residues" evidence="1">
    <location>
        <begin position="674"/>
        <end position="696"/>
    </location>
</feature>
<sequence length="990" mass="111074">MPRRSILSATERESLLALPDAKDELIRHYTFNETDLSVIRQRRGAANRLGFAVQLCYLRFPGTFLGVDEPPFPPLLRMVAAQLKMPVESWSEYGQREQTRREHLVELQTVFGFKPFTMSHYRQAVHTLTELALQTDKGIVLASALVENLRRQSIILPAMNAIERASAEAITRANRRIYAALTDSLLSPHRQRLDELLKRKDGSKVTWLAWLRQSPAKPNSRHMLEHIERLKSWQALDLPAGIERQVHQNRLLKIAREGGQMTPADLAKFEVQRRYATLVALAIEGMATVTDEIIDLHDRIIGKLFNAAKNKHQQQFQASGKAINDKVRMYGRIGQALIEAKQSGSDPFAAIEAVMPWDTFAASVTEAQTLARPADFDFLHHIGESYATLRRYAPQFLGVLKLRAAPAAKGVLDAIDMLRGMNSDSARKVPADAPTAFIKPRWAKLVLTDDGIDRRYYELCALSELKNALRSGDVWVQGSRQFKDFDEYLVPVEKFATLKLASELPLAVATDCDQYLHDRLELLEAQLATVNRMASANDLPDAIITTASGLKITPLDAAVPDAAQAMIDQTAMLLPHLKITELLMEVDEWTGFTRHFTHLKTSDTAKDKTLLLTTILADAINLGLTKMAESCPGTTYAKLSWLQAWHIRDETYSTALAELVNAQFRQPFAGNWGDGTTSSSDGQNFRTGSKAESTGHINPKYGSSPGRTFYTHISDQYAPFSAKVVNVGIRDSTYVLDGLLYHESDLRIEEHYTDTAGFTDHVFGLMHLLGFRFAPRIRDLGETKLFIPKGDAAYDALKPMISSDRLNIKQIRAHWDEILRLATSIKQGTVTASLMLRKLGSYPRQNGLAVALRELGRIERTLFILDWLQSVELRRRVHAGLNKGEARNALARAVFFYRLGEIRDRSFEQQRYRASGLNLVTAAIVLWNTVYLERATSALRGNGTALDDTLLQYLSPLGWEHINLTGDYLWRSSAKVGAGKFRPLRPLPPA</sequence>